<keyword id="KW-0106">Calcium</keyword>
<keyword id="KW-0456">Lyase</keyword>
<keyword id="KW-0479">Metal-binding</keyword>
<keyword id="KW-0732">Signal</keyword>
<accession>P9WF06</accession>
<sequence>MNGLKMLLFSTTLLTAFTLHAQVTLKQQVKITDEGLHFDGRNLDFSNVGTPDTGEKYDFFFGPNISAHGDAVKTYKHYVFMTWYKGGKSERNVMLSRYNTLSGELSTIEFPHRHTGFRGDPLVGESHNTIGLSVSPINGTIHMVFDMHAYDNNNHDGKFKDDFFRYSYSIAGAAELPHSEFTLDKFVKDTSEVSQGENDYKHLTMTGDLSDKGNFARLTYPKFFTTVDGTLLLYMRLGGNNNGAYVFNRYDAETETWSTFTKFNENNQKLKGNPYNWGLYGNMKYVNGKLRVGFQQRSNDNSDKYKYQNGVYYAYSDHPDGFGDWKNHKGEPMTWPLINSDEIKVFEPGDYVSHTDANSVYIVGSFDWTVTEKGDIHIISKVRSTDRSRPDYEEVYIHSYKPAGAEDFIISTDFTGASEIYTSGDNVYIVGLEGGRPYVEKAQGGTNNFVRVYEASDGPTFDHGTLYIKDGKVYYYLMERTSGNAMPLYLQIIDLDLDLESDANAPIVSFPSPSLTVEQGFEKLSLNIAAESPVEVRTIQSVTLYINDELVRTDTSLPYLFGHGSKPHETGAMGWLDTHEPNPSPLPAGRHIFKAVAVDSEGDSSVATMMLTVNSNAPIISFPQESLEVDEGFEKLSLNISAESAVEGRTIESVSLYIDGEFVRTDTSLPYLFGHASKPHETGAMGWLDTHSPNPSPLTSGTYEFTAVAIDSEGEESTATMQLVVKGEPEPPVVTWPNSTVTVYEGYEKLAITIDAESPVEGRDIQSVTLYRNGELVRVDTRPVWNFGHSHAPYEFGAMGWLDRHDPNPAPLSVGTHTFTAVARDSAGLETESDMTLIVLSLPGPSVMINESDISLLTEYQNLSITADASTANDDTSLVSLALYIDDQLVREIYEPPFEWGADGYSNELLELSEGSHLARVVATDSNNKQSESSIFINIDLLGDLNKDSVVDKGDTRLFTAKLRAGETMDIRYDFNGDGVVNNRDTRGLIRRCTYSRCTSN</sequence>
<proteinExistence type="evidence at protein level"/>
<dbReference type="EC" id="4.2.2.-" evidence="3"/>
<dbReference type="SMR" id="P9WF06"/>
<dbReference type="GO" id="GO:0004553">
    <property type="term" value="F:hydrolase activity, hydrolyzing O-glycosyl compounds"/>
    <property type="evidence" value="ECO:0007669"/>
    <property type="project" value="InterPro"/>
</dbReference>
<dbReference type="GO" id="GO:0016829">
    <property type="term" value="F:lyase activity"/>
    <property type="evidence" value="ECO:0007669"/>
    <property type="project" value="UniProtKB-KW"/>
</dbReference>
<dbReference type="GO" id="GO:0046872">
    <property type="term" value="F:metal ion binding"/>
    <property type="evidence" value="ECO:0007669"/>
    <property type="project" value="UniProtKB-KW"/>
</dbReference>
<dbReference type="GO" id="GO:0000272">
    <property type="term" value="P:polysaccharide catabolic process"/>
    <property type="evidence" value="ECO:0007669"/>
    <property type="project" value="InterPro"/>
</dbReference>
<dbReference type="Gene3D" id="1.10.1330.10">
    <property type="entry name" value="Dockerin domain"/>
    <property type="match status" value="1"/>
</dbReference>
<dbReference type="Gene3D" id="2.60.40.10">
    <property type="entry name" value="Immunoglobulins"/>
    <property type="match status" value="4"/>
</dbReference>
<dbReference type="InterPro" id="IPR002105">
    <property type="entry name" value="Dockerin_1_rpt"/>
</dbReference>
<dbReference type="InterPro" id="IPR036439">
    <property type="entry name" value="Dockerin_dom_sf"/>
</dbReference>
<dbReference type="InterPro" id="IPR013783">
    <property type="entry name" value="Ig-like_fold"/>
</dbReference>
<dbReference type="Pfam" id="PF15892">
    <property type="entry name" value="BNR_4"/>
    <property type="match status" value="1"/>
</dbReference>
<dbReference type="Pfam" id="PF00404">
    <property type="entry name" value="Dockerin_1"/>
    <property type="match status" value="1"/>
</dbReference>
<dbReference type="SUPFAM" id="SSF63446">
    <property type="entry name" value="Type I dockerin domain"/>
    <property type="match status" value="1"/>
</dbReference>
<gene>
    <name type="ORF">PLSV_3925</name>
</gene>
<reference key="1">
    <citation type="journal article" date="2014" name="Genome Announc.">
        <title>Draft genome sequence of Pseudoalteromonas sp. strain PLSV, an ulvan-degrading bacterium.</title>
        <authorList>
            <person name="Kopel M."/>
            <person name="Helbert W."/>
            <person name="Henrissat B."/>
            <person name="Doniger T."/>
            <person name="Banin E."/>
        </authorList>
    </citation>
    <scope>NUCLEOTIDE SEQUENCE [LARGE SCALE GENOMIC DNA]</scope>
    <source>
        <strain>PLSV</strain>
    </source>
</reference>
<reference key="2">
    <citation type="journal article" date="2016" name="J. Biol. Chem.">
        <title>New family of ulvan lyases identified in three isolates from the Alteromonadales order.</title>
        <authorList>
            <person name="Kopel M."/>
            <person name="Helbert W."/>
            <person name="Belnik Y."/>
            <person name="Buravenkov V."/>
            <person name="Herman A."/>
            <person name="Banin E."/>
        </authorList>
    </citation>
    <scope>FUNCTION</scope>
    <scope>CATALYTIC ACTIVITY</scope>
</reference>
<organism>
    <name type="scientific">Pseudoalteromonas sp. (strain PLSV)</name>
    <dbReference type="NCBI Taxonomy" id="1547444"/>
    <lineage>
        <taxon>Bacteria</taxon>
        <taxon>Pseudomonadati</taxon>
        <taxon>Pseudomonadota</taxon>
        <taxon>Gammaproteobacteria</taxon>
        <taxon>Alteromonadales</taxon>
        <taxon>Pseudoalteromonadaceae</taxon>
        <taxon>Pseudoalteromonas</taxon>
    </lineage>
</organism>
<protein>
    <recommendedName>
        <fullName>Ulvan lyase, long isoform</fullName>
        <ecNumber evidence="3">4.2.2.-</ecNumber>
    </recommendedName>
</protein>
<feature type="signal peptide" evidence="2">
    <location>
        <begin position="1"/>
        <end position="21"/>
    </location>
</feature>
<feature type="chain" id="PRO_0000448323" description="Ulvan lyase, long isoform" evidence="2">
    <location>
        <begin position="22"/>
        <end position="1001"/>
    </location>
</feature>
<feature type="active site" description="Proton donor/acceptor" evidence="1">
    <location>
        <position position="127"/>
    </location>
</feature>
<feature type="binding site" evidence="1">
    <location>
        <begin position="126"/>
        <end position="127"/>
    </location>
    <ligand>
        <name>substrate</name>
    </ligand>
</feature>
<feature type="binding site" evidence="1">
    <location>
        <position position="189"/>
    </location>
    <ligand>
        <name>Ca(2+)</name>
        <dbReference type="ChEBI" id="CHEBI:29108"/>
        <label>1</label>
        <note>structural</note>
    </ligand>
</feature>
<feature type="binding site" evidence="1">
    <location>
        <position position="199"/>
    </location>
    <ligand>
        <name>Ca(2+)</name>
        <dbReference type="ChEBI" id="CHEBI:29108"/>
        <label>1</label>
        <note>structural</note>
    </ligand>
</feature>
<feature type="binding site" evidence="1">
    <location>
        <position position="201"/>
    </location>
    <ligand>
        <name>Ca(2+)</name>
        <dbReference type="ChEBI" id="CHEBI:29108"/>
        <label>1</label>
        <note>structural</note>
    </ligand>
</feature>
<feature type="binding site" evidence="1">
    <location>
        <position position="280"/>
    </location>
    <ligand>
        <name>substrate</name>
    </ligand>
</feature>
<feature type="binding site" evidence="1">
    <location>
        <position position="297"/>
    </location>
    <ligand>
        <name>substrate</name>
    </ligand>
</feature>
<feature type="binding site" evidence="1">
    <location>
        <position position="300"/>
    </location>
    <ligand>
        <name>Ca(2+)</name>
        <dbReference type="ChEBI" id="CHEBI:29108"/>
        <label>2</label>
        <note>structural</note>
    </ligand>
</feature>
<feature type="binding site" evidence="1">
    <location>
        <position position="303"/>
    </location>
    <ligand>
        <name>Ca(2+)</name>
        <dbReference type="ChEBI" id="CHEBI:29108"/>
        <label>2</label>
        <note>structural</note>
    </ligand>
</feature>
<feature type="binding site" evidence="1">
    <location>
        <position position="305"/>
    </location>
    <ligand>
        <name>Ca(2+)</name>
        <dbReference type="ChEBI" id="CHEBI:29108"/>
        <label>2</label>
        <note>structural</note>
    </ligand>
</feature>
<feature type="binding site" evidence="1">
    <location>
        <position position="361"/>
    </location>
    <ligand>
        <name>substrate</name>
    </ligand>
</feature>
<feature type="site" description="Neutralizes the sugar carboxylate group at subsite +1" evidence="1">
    <location>
        <position position="236"/>
    </location>
</feature>
<name>UL24L_PSEXP</name>
<evidence type="ECO:0000250" key="1">
    <source>
        <dbReference type="UniProtKB" id="A0A109PTH9"/>
    </source>
</evidence>
<evidence type="ECO:0000255" key="2"/>
<evidence type="ECO:0000269" key="3">
    <source>
    </source>
</evidence>
<evidence type="ECO:0000305" key="4"/>
<comment type="function">
    <text evidence="3">Ulvan lyase involved in ulvan degradation. Ulvan is the main polysaccharide component of the Ulvales (green seaweed) cell wall. It is composed of disaccharide building blocks comprising 3-sulfated rhamnose (Rha3S) linked to D-glucuronic acid (GlcA), L-iduronic acid (IduA), or D-xylose (Xyl). Ulvan lyase catalyzes preferentially the endolytic cleavage of the glycosidic bond between Rha3S and the uronic acid GlcA, but not IduA, producing oligosaccharides that have unsaturated 4-deoxy-L-threo-hex-4-enopyranosiduronic acid (deltaUA) at the non-reducing end. The most abundant end products in the degradation of the ulvan polysaccharide were deltaUA-Rha3S disaccharides and deltaUA-Rha3S-IduA-Rha3S and deltaUA-Rha3S-Xyl-Rha3S tetrasaccharides.</text>
</comment>
<comment type="similarity">
    <text evidence="4">Belongs to the polysaccharide lyase 24 family.</text>
</comment>